<feature type="chain" id="PRO_0000283316" description="Putative F-box protein At1g47390">
    <location>
        <begin position="1"/>
        <end position="370"/>
    </location>
</feature>
<feature type="domain" description="F-box" evidence="1">
    <location>
        <begin position="1"/>
        <end position="47"/>
    </location>
</feature>
<proteinExistence type="predicted"/>
<sequence>MAPEEKLPCELIEEILSRVPPESLVRFRTVSKKWNALFDDKMFINNHKMTFRFILATESKFYSVSMTPKIEVRELSLDIPGLELKPKILIDCNGFLLCGMEKEGIVVWNPWLRQAKWIKPKVNQPSLCFNGIGYEYDNMKLESSGYKTLVSYPNELDPTRSVWKIHDFASNSWKYTNLVMSCSSGVTLFGASVSLNGILYWVASHLKNNSLFVLVYYNFSNEKVYKFSDLPCGENHHHDVLVLRIFREDRLSLLKQCHLTKKIEIWVTKNKIRNCSSGDVDSAEWMNFMEVSTLNLPVLVHPSYFIDDKKLVVCSCDQTGQAWIYVVGDNKLISKIQIDSVVGPWPLHCSFFPSLVSIPRSQTKKAALQV</sequence>
<accession>Q9FX09</accession>
<reference key="1">
    <citation type="journal article" date="2000" name="Nature">
        <title>Sequence and analysis of chromosome 1 of the plant Arabidopsis thaliana.</title>
        <authorList>
            <person name="Theologis A."/>
            <person name="Ecker J.R."/>
            <person name="Palm C.J."/>
            <person name="Federspiel N.A."/>
            <person name="Kaul S."/>
            <person name="White O."/>
            <person name="Alonso J."/>
            <person name="Altafi H."/>
            <person name="Araujo R."/>
            <person name="Bowman C.L."/>
            <person name="Brooks S.Y."/>
            <person name="Buehler E."/>
            <person name="Chan A."/>
            <person name="Chao Q."/>
            <person name="Chen H."/>
            <person name="Cheuk R.F."/>
            <person name="Chin C.W."/>
            <person name="Chung M.K."/>
            <person name="Conn L."/>
            <person name="Conway A.B."/>
            <person name="Conway A.R."/>
            <person name="Creasy T.H."/>
            <person name="Dewar K."/>
            <person name="Dunn P."/>
            <person name="Etgu P."/>
            <person name="Feldblyum T.V."/>
            <person name="Feng J.-D."/>
            <person name="Fong B."/>
            <person name="Fujii C.Y."/>
            <person name="Gill J.E."/>
            <person name="Goldsmith A.D."/>
            <person name="Haas B."/>
            <person name="Hansen N.F."/>
            <person name="Hughes B."/>
            <person name="Huizar L."/>
            <person name="Hunter J.L."/>
            <person name="Jenkins J."/>
            <person name="Johnson-Hopson C."/>
            <person name="Khan S."/>
            <person name="Khaykin E."/>
            <person name="Kim C.J."/>
            <person name="Koo H.L."/>
            <person name="Kremenetskaia I."/>
            <person name="Kurtz D.B."/>
            <person name="Kwan A."/>
            <person name="Lam B."/>
            <person name="Langin-Hooper S."/>
            <person name="Lee A."/>
            <person name="Lee J.M."/>
            <person name="Lenz C.A."/>
            <person name="Li J.H."/>
            <person name="Li Y.-P."/>
            <person name="Lin X."/>
            <person name="Liu S.X."/>
            <person name="Liu Z.A."/>
            <person name="Luros J.S."/>
            <person name="Maiti R."/>
            <person name="Marziali A."/>
            <person name="Militscher J."/>
            <person name="Miranda M."/>
            <person name="Nguyen M."/>
            <person name="Nierman W.C."/>
            <person name="Osborne B.I."/>
            <person name="Pai G."/>
            <person name="Peterson J."/>
            <person name="Pham P.K."/>
            <person name="Rizzo M."/>
            <person name="Rooney T."/>
            <person name="Rowley D."/>
            <person name="Sakano H."/>
            <person name="Salzberg S.L."/>
            <person name="Schwartz J.R."/>
            <person name="Shinn P."/>
            <person name="Southwick A.M."/>
            <person name="Sun H."/>
            <person name="Tallon L.J."/>
            <person name="Tambunga G."/>
            <person name="Toriumi M.J."/>
            <person name="Town C.D."/>
            <person name="Utterback T."/>
            <person name="Van Aken S."/>
            <person name="Vaysberg M."/>
            <person name="Vysotskaia V.S."/>
            <person name="Walker M."/>
            <person name="Wu D."/>
            <person name="Yu G."/>
            <person name="Fraser C.M."/>
            <person name="Venter J.C."/>
            <person name="Davis R.W."/>
        </authorList>
    </citation>
    <scope>NUCLEOTIDE SEQUENCE [LARGE SCALE GENOMIC DNA]</scope>
    <source>
        <strain>cv. Columbia</strain>
    </source>
</reference>
<reference key="2">
    <citation type="journal article" date="2017" name="Plant J.">
        <title>Araport11: a complete reannotation of the Arabidopsis thaliana reference genome.</title>
        <authorList>
            <person name="Cheng C.Y."/>
            <person name="Krishnakumar V."/>
            <person name="Chan A.P."/>
            <person name="Thibaud-Nissen F."/>
            <person name="Schobel S."/>
            <person name="Town C.D."/>
        </authorList>
    </citation>
    <scope>GENOME REANNOTATION</scope>
    <source>
        <strain>cv. Columbia</strain>
    </source>
</reference>
<gene>
    <name type="ordered locus">At1g47390</name>
    <name type="ORF">T3F24.1</name>
</gene>
<organism>
    <name type="scientific">Arabidopsis thaliana</name>
    <name type="common">Mouse-ear cress</name>
    <dbReference type="NCBI Taxonomy" id="3702"/>
    <lineage>
        <taxon>Eukaryota</taxon>
        <taxon>Viridiplantae</taxon>
        <taxon>Streptophyta</taxon>
        <taxon>Embryophyta</taxon>
        <taxon>Tracheophyta</taxon>
        <taxon>Spermatophyta</taxon>
        <taxon>Magnoliopsida</taxon>
        <taxon>eudicotyledons</taxon>
        <taxon>Gunneridae</taxon>
        <taxon>Pentapetalae</taxon>
        <taxon>rosids</taxon>
        <taxon>malvids</taxon>
        <taxon>Brassicales</taxon>
        <taxon>Brassicaceae</taxon>
        <taxon>Camelineae</taxon>
        <taxon>Arabidopsis</taxon>
    </lineage>
</organism>
<name>FB40_ARATH</name>
<protein>
    <recommendedName>
        <fullName>Putative F-box protein At1g47390</fullName>
    </recommendedName>
</protein>
<dbReference type="EMBL" id="AC015449">
    <property type="protein sequence ID" value="AAG11419.1"/>
    <property type="molecule type" value="Genomic_DNA"/>
</dbReference>
<dbReference type="EMBL" id="CP002684">
    <property type="protein sequence ID" value="AEE32163.1"/>
    <property type="molecule type" value="Genomic_DNA"/>
</dbReference>
<dbReference type="PIR" id="F96514">
    <property type="entry name" value="F96514"/>
</dbReference>
<dbReference type="RefSeq" id="NP_564505.1">
    <property type="nucleotide sequence ID" value="NM_103633.1"/>
</dbReference>
<dbReference type="FunCoup" id="Q9FX09">
    <property type="interactions" value="2"/>
</dbReference>
<dbReference type="iPTMnet" id="Q9FX09"/>
<dbReference type="PaxDb" id="3702-AT1G47390.1"/>
<dbReference type="ProteomicsDB" id="230062"/>
<dbReference type="EnsemblPlants" id="AT1G47390.1">
    <property type="protein sequence ID" value="AT1G47390.1"/>
    <property type="gene ID" value="AT1G47390"/>
</dbReference>
<dbReference type="GeneID" id="841142"/>
<dbReference type="Gramene" id="AT1G47390.1">
    <property type="protein sequence ID" value="AT1G47390.1"/>
    <property type="gene ID" value="AT1G47390"/>
</dbReference>
<dbReference type="KEGG" id="ath:AT1G47390"/>
<dbReference type="Araport" id="AT1G47390"/>
<dbReference type="TAIR" id="AT1G47390"/>
<dbReference type="HOGENOM" id="CLU_034692_2_1_1"/>
<dbReference type="InParanoid" id="Q9FX09"/>
<dbReference type="OMA" id="EHEGNHQ"/>
<dbReference type="PhylomeDB" id="Q9FX09"/>
<dbReference type="PRO" id="PR:Q9FX09"/>
<dbReference type="Proteomes" id="UP000006548">
    <property type="component" value="Chromosome 1"/>
</dbReference>
<dbReference type="ExpressionAtlas" id="Q9FX09">
    <property type="expression patterns" value="baseline and differential"/>
</dbReference>
<dbReference type="CDD" id="cd22157">
    <property type="entry name" value="F-box_AtFBW1-like"/>
    <property type="match status" value="1"/>
</dbReference>
<dbReference type="Gene3D" id="1.20.1280.50">
    <property type="match status" value="1"/>
</dbReference>
<dbReference type="InterPro" id="IPR006527">
    <property type="entry name" value="F-box-assoc_dom_typ1"/>
</dbReference>
<dbReference type="InterPro" id="IPR017451">
    <property type="entry name" value="F-box-assoc_interact_dom"/>
</dbReference>
<dbReference type="InterPro" id="IPR036047">
    <property type="entry name" value="F-box-like_dom_sf"/>
</dbReference>
<dbReference type="InterPro" id="IPR001810">
    <property type="entry name" value="F-box_dom"/>
</dbReference>
<dbReference type="InterPro" id="IPR011043">
    <property type="entry name" value="Gal_Oxase/kelch_b-propeller"/>
</dbReference>
<dbReference type="InterPro" id="IPR050796">
    <property type="entry name" value="SCF_F-box_component"/>
</dbReference>
<dbReference type="NCBIfam" id="TIGR01640">
    <property type="entry name" value="F_box_assoc_1"/>
    <property type="match status" value="1"/>
</dbReference>
<dbReference type="PANTHER" id="PTHR31672">
    <property type="entry name" value="BNACNNG10540D PROTEIN"/>
    <property type="match status" value="1"/>
</dbReference>
<dbReference type="PANTHER" id="PTHR31672:SF13">
    <property type="entry name" value="F-BOX PROTEIN CPR30-LIKE"/>
    <property type="match status" value="1"/>
</dbReference>
<dbReference type="Pfam" id="PF00646">
    <property type="entry name" value="F-box"/>
    <property type="match status" value="1"/>
</dbReference>
<dbReference type="Pfam" id="PF07734">
    <property type="entry name" value="FBA_1"/>
    <property type="match status" value="1"/>
</dbReference>
<dbReference type="SMART" id="SM00256">
    <property type="entry name" value="FBOX"/>
    <property type="match status" value="1"/>
</dbReference>
<dbReference type="SUPFAM" id="SSF81383">
    <property type="entry name" value="F-box domain"/>
    <property type="match status" value="1"/>
</dbReference>
<dbReference type="SUPFAM" id="SSF50965">
    <property type="entry name" value="Galactose oxidase, central domain"/>
    <property type="match status" value="1"/>
</dbReference>
<dbReference type="PROSITE" id="PS50181">
    <property type="entry name" value="FBOX"/>
    <property type="match status" value="1"/>
</dbReference>
<keyword id="KW-1185">Reference proteome</keyword>
<evidence type="ECO:0000255" key="1">
    <source>
        <dbReference type="PROSITE-ProRule" id="PRU00080"/>
    </source>
</evidence>